<accession>B1J6U5</accession>
<evidence type="ECO:0000255" key="1">
    <source>
        <dbReference type="HAMAP-Rule" id="MF_00080"/>
    </source>
</evidence>
<dbReference type="EMBL" id="CP000949">
    <property type="protein sequence ID" value="ACA72471.1"/>
    <property type="molecule type" value="Genomic_DNA"/>
</dbReference>
<dbReference type="SMR" id="B1J6U5"/>
<dbReference type="STRING" id="390235.PputW619_1968"/>
<dbReference type="KEGG" id="ppw:PputW619_1968"/>
<dbReference type="eggNOG" id="COG0290">
    <property type="taxonomic scope" value="Bacteria"/>
</dbReference>
<dbReference type="HOGENOM" id="CLU_054919_3_2_6"/>
<dbReference type="GO" id="GO:0005829">
    <property type="term" value="C:cytosol"/>
    <property type="evidence" value="ECO:0007669"/>
    <property type="project" value="TreeGrafter"/>
</dbReference>
<dbReference type="GO" id="GO:0016020">
    <property type="term" value="C:membrane"/>
    <property type="evidence" value="ECO:0007669"/>
    <property type="project" value="TreeGrafter"/>
</dbReference>
<dbReference type="GO" id="GO:0043022">
    <property type="term" value="F:ribosome binding"/>
    <property type="evidence" value="ECO:0007669"/>
    <property type="project" value="TreeGrafter"/>
</dbReference>
<dbReference type="GO" id="GO:0003743">
    <property type="term" value="F:translation initiation factor activity"/>
    <property type="evidence" value="ECO:0007669"/>
    <property type="project" value="UniProtKB-UniRule"/>
</dbReference>
<dbReference type="GO" id="GO:0032790">
    <property type="term" value="P:ribosome disassembly"/>
    <property type="evidence" value="ECO:0007669"/>
    <property type="project" value="TreeGrafter"/>
</dbReference>
<dbReference type="FunFam" id="3.10.20.80:FF:000001">
    <property type="entry name" value="Translation initiation factor IF-3"/>
    <property type="match status" value="1"/>
</dbReference>
<dbReference type="FunFam" id="3.30.110.10:FF:000001">
    <property type="entry name" value="Translation initiation factor IF-3"/>
    <property type="match status" value="1"/>
</dbReference>
<dbReference type="Gene3D" id="3.30.110.10">
    <property type="entry name" value="Translation initiation factor 3 (IF-3), C-terminal domain"/>
    <property type="match status" value="1"/>
</dbReference>
<dbReference type="Gene3D" id="3.10.20.80">
    <property type="entry name" value="Translation initiation factor 3 (IF-3), N-terminal domain"/>
    <property type="match status" value="1"/>
</dbReference>
<dbReference type="HAMAP" id="MF_00080">
    <property type="entry name" value="IF_3"/>
    <property type="match status" value="1"/>
</dbReference>
<dbReference type="InterPro" id="IPR036788">
    <property type="entry name" value="T_IF-3_C_sf"/>
</dbReference>
<dbReference type="InterPro" id="IPR036787">
    <property type="entry name" value="T_IF-3_N_sf"/>
</dbReference>
<dbReference type="InterPro" id="IPR001288">
    <property type="entry name" value="Translation_initiation_fac_3"/>
</dbReference>
<dbReference type="InterPro" id="IPR019815">
    <property type="entry name" value="Translation_initiation_fac_3_C"/>
</dbReference>
<dbReference type="InterPro" id="IPR019814">
    <property type="entry name" value="Translation_initiation_fac_3_N"/>
</dbReference>
<dbReference type="NCBIfam" id="TIGR00168">
    <property type="entry name" value="infC"/>
    <property type="match status" value="1"/>
</dbReference>
<dbReference type="PANTHER" id="PTHR10938">
    <property type="entry name" value="TRANSLATION INITIATION FACTOR IF-3"/>
    <property type="match status" value="1"/>
</dbReference>
<dbReference type="PANTHER" id="PTHR10938:SF0">
    <property type="entry name" value="TRANSLATION INITIATION FACTOR IF-3, MITOCHONDRIAL"/>
    <property type="match status" value="1"/>
</dbReference>
<dbReference type="Pfam" id="PF00707">
    <property type="entry name" value="IF3_C"/>
    <property type="match status" value="1"/>
</dbReference>
<dbReference type="Pfam" id="PF05198">
    <property type="entry name" value="IF3_N"/>
    <property type="match status" value="1"/>
</dbReference>
<dbReference type="SUPFAM" id="SSF55200">
    <property type="entry name" value="Translation initiation factor IF3, C-terminal domain"/>
    <property type="match status" value="1"/>
</dbReference>
<dbReference type="SUPFAM" id="SSF54364">
    <property type="entry name" value="Translation initiation factor IF3, N-terminal domain"/>
    <property type="match status" value="1"/>
</dbReference>
<name>IF3_PSEPW</name>
<feature type="chain" id="PRO_1000092782" description="Translation initiation factor IF-3">
    <location>
        <begin position="1"/>
        <end position="183"/>
    </location>
</feature>
<comment type="function">
    <text evidence="1">IF-3 binds to the 30S ribosomal subunit and shifts the equilibrium between 70S ribosomes and their 50S and 30S subunits in favor of the free subunits, thus enhancing the availability of 30S subunits on which protein synthesis initiation begins.</text>
</comment>
<comment type="subunit">
    <text evidence="1">Monomer.</text>
</comment>
<comment type="subcellular location">
    <subcellularLocation>
        <location evidence="1">Cytoplasm</location>
    </subcellularLocation>
</comment>
<comment type="similarity">
    <text evidence="1">Belongs to the IF-3 family.</text>
</comment>
<proteinExistence type="inferred from homology"/>
<organism>
    <name type="scientific">Pseudomonas putida (strain W619)</name>
    <dbReference type="NCBI Taxonomy" id="390235"/>
    <lineage>
        <taxon>Bacteria</taxon>
        <taxon>Pseudomonadati</taxon>
        <taxon>Pseudomonadota</taxon>
        <taxon>Gammaproteobacteria</taxon>
        <taxon>Pseudomonadales</taxon>
        <taxon>Pseudomonadaceae</taxon>
        <taxon>Pseudomonas</taxon>
    </lineage>
</organism>
<sequence length="183" mass="20851">MTIKREMRNDKRAAPKAPINENISAREVRLIGADGEQVGIVSIDEALRIADEAKLDLVEISADAVPPVCKVMDYGKHLFEKKKQANEAKKNQKQIQIKEIKFRPGTEDGDYQVKLRNLVRFLTDGDKAKISLRFRGREMAHQELGMELLKRVEADLAEYGTVEQHPKMEGRQLMMVIAPKKKK</sequence>
<gene>
    <name evidence="1" type="primary">infC</name>
    <name type="ordered locus">PputW619_1968</name>
</gene>
<keyword id="KW-0963">Cytoplasm</keyword>
<keyword id="KW-0396">Initiation factor</keyword>
<keyword id="KW-0648">Protein biosynthesis</keyword>
<reference key="1">
    <citation type="submission" date="2008-02" db="EMBL/GenBank/DDBJ databases">
        <title>Complete sequence of Pseudomonas putida W619.</title>
        <authorList>
            <person name="Copeland A."/>
            <person name="Lucas S."/>
            <person name="Lapidus A."/>
            <person name="Barry K."/>
            <person name="Detter J.C."/>
            <person name="Glavina del Rio T."/>
            <person name="Dalin E."/>
            <person name="Tice H."/>
            <person name="Pitluck S."/>
            <person name="Chain P."/>
            <person name="Malfatti S."/>
            <person name="Shin M."/>
            <person name="Vergez L."/>
            <person name="Schmutz J."/>
            <person name="Larimer F."/>
            <person name="Land M."/>
            <person name="Hauser L."/>
            <person name="Kyrpides N."/>
            <person name="Kim E."/>
            <person name="Taghavi S."/>
            <person name="Vangronsveld D."/>
            <person name="van der Lelie D."/>
            <person name="Richardson P."/>
        </authorList>
    </citation>
    <scope>NUCLEOTIDE SEQUENCE [LARGE SCALE GENOMIC DNA]</scope>
    <source>
        <strain>W619</strain>
    </source>
</reference>
<protein>
    <recommendedName>
        <fullName evidence="1">Translation initiation factor IF-3</fullName>
    </recommendedName>
</protein>